<dbReference type="EC" id="1.7.5.1"/>
<dbReference type="EMBL" id="M20147">
    <property type="protein sequence ID" value="AAA24197.1"/>
    <property type="molecule type" value="Genomic_DNA"/>
</dbReference>
<dbReference type="EMBL" id="U00096">
    <property type="protein sequence ID" value="AAC74311.1"/>
    <property type="molecule type" value="Genomic_DNA"/>
</dbReference>
<dbReference type="EMBL" id="AP009048">
    <property type="protein sequence ID" value="BAA36097.1"/>
    <property type="molecule type" value="Genomic_DNA"/>
</dbReference>
<dbReference type="PIR" id="C27737">
    <property type="entry name" value="RDECNG"/>
</dbReference>
<dbReference type="RefSeq" id="NP_415745.1">
    <property type="nucleotide sequence ID" value="NC_000913.3"/>
</dbReference>
<dbReference type="RefSeq" id="WP_001160108.1">
    <property type="nucleotide sequence ID" value="NZ_LN832404.1"/>
</dbReference>
<dbReference type="PDB" id="1Q16">
    <property type="method" value="X-ray"/>
    <property type="resolution" value="1.90 A"/>
    <property type="chains" value="C=1-225"/>
</dbReference>
<dbReference type="PDB" id="1SIW">
    <property type="method" value="X-ray"/>
    <property type="resolution" value="2.20 A"/>
    <property type="chains" value="C=1-225"/>
</dbReference>
<dbReference type="PDB" id="1Y4Z">
    <property type="method" value="X-ray"/>
    <property type="resolution" value="2.00 A"/>
    <property type="chains" value="C=1-225"/>
</dbReference>
<dbReference type="PDB" id="1Y5I">
    <property type="method" value="X-ray"/>
    <property type="resolution" value="1.90 A"/>
    <property type="chains" value="C=1-225"/>
</dbReference>
<dbReference type="PDB" id="1Y5L">
    <property type="method" value="X-ray"/>
    <property type="resolution" value="2.50 A"/>
    <property type="chains" value="C=1-225"/>
</dbReference>
<dbReference type="PDB" id="1Y5N">
    <property type="method" value="X-ray"/>
    <property type="resolution" value="2.50 A"/>
    <property type="chains" value="C=1-225"/>
</dbReference>
<dbReference type="PDB" id="3EGW">
    <property type="method" value="X-ray"/>
    <property type="resolution" value="1.90 A"/>
    <property type="chains" value="C=1-225"/>
</dbReference>
<dbReference type="PDB" id="3IR5">
    <property type="method" value="X-ray"/>
    <property type="resolution" value="2.30 A"/>
    <property type="chains" value="C=1-225"/>
</dbReference>
<dbReference type="PDB" id="3IR6">
    <property type="method" value="X-ray"/>
    <property type="resolution" value="2.80 A"/>
    <property type="chains" value="C=1-225"/>
</dbReference>
<dbReference type="PDB" id="3IR7">
    <property type="method" value="X-ray"/>
    <property type="resolution" value="2.50 A"/>
    <property type="chains" value="C=1-225"/>
</dbReference>
<dbReference type="PDBsum" id="1Q16"/>
<dbReference type="PDBsum" id="1SIW"/>
<dbReference type="PDBsum" id="1Y4Z"/>
<dbReference type="PDBsum" id="1Y5I"/>
<dbReference type="PDBsum" id="1Y5L"/>
<dbReference type="PDBsum" id="1Y5N"/>
<dbReference type="PDBsum" id="3EGW"/>
<dbReference type="PDBsum" id="3IR5"/>
<dbReference type="PDBsum" id="3IR6"/>
<dbReference type="PDBsum" id="3IR7"/>
<dbReference type="SMR" id="P11350"/>
<dbReference type="BioGRID" id="4262233">
    <property type="interactions" value="13"/>
</dbReference>
<dbReference type="ComplexPortal" id="CPX-1974">
    <property type="entry name" value="Nitrate reductase A complex"/>
</dbReference>
<dbReference type="DIP" id="DIP-10313N"/>
<dbReference type="FunCoup" id="P11350">
    <property type="interactions" value="400"/>
</dbReference>
<dbReference type="IntAct" id="P11350">
    <property type="interactions" value="2"/>
</dbReference>
<dbReference type="STRING" id="511145.b1227"/>
<dbReference type="DrugBank" id="DB07349">
    <property type="generic name" value="(1S)-2-{[{[(2S)-2,3-DIHYDROXYPROPYL]OXY}(HYDROXY)PHOSPHORYL]OXY}-1-[(PENTANOYLOXY)METHYL]ETHYL OCTANOATE"/>
</dbReference>
<dbReference type="DrugBank" id="DB04464">
    <property type="generic name" value="N-Formylmethionine"/>
</dbReference>
<dbReference type="TCDB" id="5.A.3.1.1">
    <property type="family name" value="the prokaryotic molybdopterin-containing oxidoreductase (pmo) family"/>
</dbReference>
<dbReference type="jPOST" id="P11350"/>
<dbReference type="PaxDb" id="511145-b1227"/>
<dbReference type="EnsemblBacteria" id="AAC74311">
    <property type="protein sequence ID" value="AAC74311"/>
    <property type="gene ID" value="b1227"/>
</dbReference>
<dbReference type="GeneID" id="945808"/>
<dbReference type="KEGG" id="ecj:JW1218"/>
<dbReference type="KEGG" id="eco:b1227"/>
<dbReference type="KEGG" id="ecoc:C3026_07215"/>
<dbReference type="PATRIC" id="fig|1411691.4.peg.1054"/>
<dbReference type="EchoBASE" id="EB0634"/>
<dbReference type="eggNOG" id="COG2181">
    <property type="taxonomic scope" value="Bacteria"/>
</dbReference>
<dbReference type="HOGENOM" id="CLU_092378_1_0_6"/>
<dbReference type="InParanoid" id="P11350"/>
<dbReference type="OMA" id="WTTHTSQ"/>
<dbReference type="OrthoDB" id="9788113at2"/>
<dbReference type="PhylomeDB" id="P11350"/>
<dbReference type="BioCyc" id="EcoCyc:NARI-MONOMER"/>
<dbReference type="BioCyc" id="MetaCyc:NARI-MONOMER"/>
<dbReference type="BRENDA" id="1.7.5.1">
    <property type="organism ID" value="2026"/>
</dbReference>
<dbReference type="EvolutionaryTrace" id="P11350"/>
<dbReference type="PHI-base" id="PHI:10515"/>
<dbReference type="PRO" id="PR:P11350"/>
<dbReference type="Proteomes" id="UP000000625">
    <property type="component" value="Chromosome"/>
</dbReference>
<dbReference type="GO" id="GO:0016020">
    <property type="term" value="C:membrane"/>
    <property type="evidence" value="ECO:0000314"/>
    <property type="project" value="ComplexPortal"/>
</dbReference>
<dbReference type="GO" id="GO:0044799">
    <property type="term" value="C:NarGHI complex"/>
    <property type="evidence" value="ECO:0000314"/>
    <property type="project" value="EcoCyc"/>
</dbReference>
<dbReference type="GO" id="GO:0009325">
    <property type="term" value="C:nitrate reductase complex"/>
    <property type="evidence" value="ECO:0000314"/>
    <property type="project" value="CACAO"/>
</dbReference>
<dbReference type="GO" id="GO:0005886">
    <property type="term" value="C:plasma membrane"/>
    <property type="evidence" value="ECO:0000314"/>
    <property type="project" value="EcoCyc"/>
</dbReference>
<dbReference type="GO" id="GO:0009055">
    <property type="term" value="F:electron transfer activity"/>
    <property type="evidence" value="ECO:0000314"/>
    <property type="project" value="EcoCyc"/>
</dbReference>
<dbReference type="GO" id="GO:0020037">
    <property type="term" value="F:heme binding"/>
    <property type="evidence" value="ECO:0000314"/>
    <property type="project" value="EcoCyc"/>
</dbReference>
<dbReference type="GO" id="GO:0046872">
    <property type="term" value="F:metal ion binding"/>
    <property type="evidence" value="ECO:0007669"/>
    <property type="project" value="UniProtKB-KW"/>
</dbReference>
<dbReference type="GO" id="GO:0160182">
    <property type="term" value="F:nitrate reductase (quinone) activity"/>
    <property type="evidence" value="ECO:0007669"/>
    <property type="project" value="UniProtKB-EC"/>
</dbReference>
<dbReference type="GO" id="GO:0008940">
    <property type="term" value="F:nitrate reductase activity"/>
    <property type="evidence" value="ECO:0000314"/>
    <property type="project" value="EcoCyc"/>
</dbReference>
<dbReference type="GO" id="GO:0019645">
    <property type="term" value="P:anaerobic electron transport chain"/>
    <property type="evidence" value="ECO:0000314"/>
    <property type="project" value="ComplexPortal"/>
</dbReference>
<dbReference type="GO" id="GO:0009061">
    <property type="term" value="P:anaerobic respiration"/>
    <property type="evidence" value="ECO:0000270"/>
    <property type="project" value="EcoCyc"/>
</dbReference>
<dbReference type="GO" id="GO:0042128">
    <property type="term" value="P:nitrate assimilation"/>
    <property type="evidence" value="ECO:0007669"/>
    <property type="project" value="UniProtKB-KW"/>
</dbReference>
<dbReference type="GO" id="GO:0042126">
    <property type="term" value="P:nitrate metabolic process"/>
    <property type="evidence" value="ECO:0000314"/>
    <property type="project" value="ComplexPortal"/>
</dbReference>
<dbReference type="FunFam" id="1.20.950.20:FF:000001">
    <property type="entry name" value="Respiratory nitrate reductase subunit gamma"/>
    <property type="match status" value="1"/>
</dbReference>
<dbReference type="Gene3D" id="1.20.950.20">
    <property type="entry name" value="Transmembrane di-heme cytochromes, Chain C"/>
    <property type="match status" value="1"/>
</dbReference>
<dbReference type="InterPro" id="IPR051936">
    <property type="entry name" value="Heme-iron_electron_transfer"/>
</dbReference>
<dbReference type="InterPro" id="IPR023234">
    <property type="entry name" value="NarG-like_domain"/>
</dbReference>
<dbReference type="InterPro" id="IPR036197">
    <property type="entry name" value="NarG-like_sf"/>
</dbReference>
<dbReference type="InterPro" id="IPR003816">
    <property type="entry name" value="Nitrate_red_gam"/>
</dbReference>
<dbReference type="NCBIfam" id="TIGR00351">
    <property type="entry name" value="narI"/>
    <property type="match status" value="1"/>
</dbReference>
<dbReference type="PANTHER" id="PTHR30598">
    <property type="entry name" value="NITRATE REDUCTASE PRIVATE CHAPERONE, REDOX ENZYME MATURATION PROTEIN REMP FAMILY"/>
    <property type="match status" value="1"/>
</dbReference>
<dbReference type="PANTHER" id="PTHR30598:SF3">
    <property type="entry name" value="RESPIRATORY NITRATE REDUCTASE 1 GAMMA CHAIN"/>
    <property type="match status" value="1"/>
</dbReference>
<dbReference type="Pfam" id="PF02665">
    <property type="entry name" value="Nitrate_red_gam"/>
    <property type="match status" value="1"/>
</dbReference>
<dbReference type="SUPFAM" id="SSF103501">
    <property type="entry name" value="Respiratory nitrate reductase 1 gamma chain"/>
    <property type="match status" value="1"/>
</dbReference>
<feature type="chain" id="PRO_0000096723" description="Respiratory nitrate reductase 1 gamma chain">
    <location>
        <begin position="1"/>
        <end position="225"/>
    </location>
</feature>
<feature type="topological domain" description="Periplasmic" evidence="2">
    <location>
        <begin position="1"/>
        <end position="3"/>
    </location>
</feature>
<feature type="transmembrane region" description="Helical; Name=1">
    <location>
        <begin position="4"/>
        <end position="29"/>
    </location>
</feature>
<feature type="topological domain" description="Cytoplasmic" evidence="2">
    <location>
        <begin position="30"/>
        <end position="47"/>
    </location>
</feature>
<feature type="transmembrane region" description="Helical; Name=2">
    <location>
        <begin position="48"/>
        <end position="70"/>
    </location>
</feature>
<feature type="topological domain" description="Periplasmic" evidence="2">
    <location>
        <begin position="71"/>
        <end position="82"/>
    </location>
</feature>
<feature type="transmembrane region" description="Helical; Name=3">
    <location>
        <begin position="83"/>
        <end position="112"/>
    </location>
</feature>
<feature type="topological domain" description="Cytoplasmic" evidence="2">
    <location>
        <begin position="113"/>
        <end position="124"/>
    </location>
</feature>
<feature type="transmembrane region" description="Helical; Name=4">
    <location>
        <begin position="125"/>
        <end position="148"/>
    </location>
</feature>
<feature type="topological domain" description="Periplasmic" evidence="2">
    <location>
        <begin position="149"/>
        <end position="182"/>
    </location>
</feature>
<feature type="transmembrane region" description="Helical; Name=5">
    <location>
        <begin position="183"/>
        <end position="198"/>
    </location>
</feature>
<feature type="topological domain" description="Cytoplasmic" evidence="2">
    <location>
        <begin position="199"/>
        <end position="225"/>
    </location>
</feature>
<feature type="binding site" description="axial binding residue" evidence="1">
    <location>
        <position position="56"/>
    </location>
    <ligand>
        <name>heme b</name>
        <dbReference type="ChEBI" id="CHEBI:60344"/>
        <label>1</label>
    </ligand>
    <ligandPart>
        <name>Fe</name>
        <dbReference type="ChEBI" id="CHEBI:18248"/>
    </ligandPart>
</feature>
<feature type="binding site" description="axial binding residue" evidence="1">
    <location>
        <position position="66"/>
    </location>
    <ligand>
        <name>heme b</name>
        <dbReference type="ChEBI" id="CHEBI:60344"/>
        <label>2</label>
    </ligand>
    <ligandPart>
        <name>Fe</name>
        <dbReference type="ChEBI" id="CHEBI:18248"/>
    </ligandPart>
</feature>
<feature type="binding site" description="axial binding residue" evidence="1">
    <location>
        <position position="187"/>
    </location>
    <ligand>
        <name>heme b</name>
        <dbReference type="ChEBI" id="CHEBI:60344"/>
        <label>2</label>
    </ligand>
    <ligandPart>
        <name>Fe</name>
        <dbReference type="ChEBI" id="CHEBI:18248"/>
    </ligandPart>
</feature>
<feature type="binding site" description="axial binding residue" evidence="1">
    <location>
        <position position="205"/>
    </location>
    <ligand>
        <name>heme b</name>
        <dbReference type="ChEBI" id="CHEBI:60344"/>
        <label>1</label>
    </ligand>
    <ligandPart>
        <name>Fe</name>
        <dbReference type="ChEBI" id="CHEBI:18248"/>
    </ligandPart>
</feature>
<feature type="modified residue" description="N-formylmethionine" evidence="3">
    <location>
        <position position="1"/>
    </location>
</feature>
<feature type="helix" evidence="6">
    <location>
        <begin position="2"/>
        <end position="10"/>
    </location>
</feature>
<feature type="helix" evidence="6">
    <location>
        <begin position="12"/>
        <end position="30"/>
    </location>
</feature>
<feature type="helix" evidence="6">
    <location>
        <begin position="32"/>
        <end position="34"/>
    </location>
</feature>
<feature type="turn" evidence="6">
    <location>
        <begin position="41"/>
        <end position="43"/>
    </location>
</feature>
<feature type="helix" evidence="6">
    <location>
        <begin position="48"/>
        <end position="71"/>
    </location>
</feature>
<feature type="turn" evidence="8">
    <location>
        <begin position="74"/>
        <end position="80"/>
    </location>
</feature>
<feature type="helix" evidence="6">
    <location>
        <begin position="83"/>
        <end position="114"/>
    </location>
</feature>
<feature type="helix" evidence="6">
    <location>
        <begin position="116"/>
        <end position="121"/>
    </location>
</feature>
<feature type="helix" evidence="6">
    <location>
        <begin position="124"/>
        <end position="147"/>
    </location>
</feature>
<feature type="helix" evidence="6">
    <location>
        <begin position="148"/>
        <end position="150"/>
    </location>
</feature>
<feature type="turn" evidence="7">
    <location>
        <begin position="151"/>
        <end position="153"/>
    </location>
</feature>
<feature type="helix" evidence="6">
    <location>
        <begin position="154"/>
        <end position="167"/>
    </location>
</feature>
<feature type="helix" evidence="6">
    <location>
        <begin position="173"/>
        <end position="177"/>
    </location>
</feature>
<feature type="helix" evidence="6">
    <location>
        <begin position="182"/>
        <end position="197"/>
    </location>
</feature>
<feature type="helix" evidence="6">
    <location>
        <begin position="198"/>
        <end position="200"/>
    </location>
</feature>
<feature type="helix" evidence="6">
    <location>
        <begin position="202"/>
        <end position="208"/>
    </location>
</feature>
<feature type="helix" evidence="6">
    <location>
        <begin position="211"/>
        <end position="215"/>
    </location>
</feature>
<feature type="strand" evidence="6">
    <location>
        <begin position="218"/>
        <end position="222"/>
    </location>
</feature>
<proteinExistence type="evidence at protein level"/>
<comment type="function">
    <text>The nitrate reductase enzyme complex allows E.coli to use nitrate as an electron acceptor during anaerobic growth. The gamma chain is a membrane-embedded heme-iron unit resembling cytochrome b, which transfers electrons from quinones to the beta subunit.</text>
</comment>
<comment type="catalytic activity">
    <reaction>
        <text>nitrate + a quinol = a quinone + nitrite + H2O</text>
        <dbReference type="Rhea" id="RHEA:56144"/>
        <dbReference type="ChEBI" id="CHEBI:15377"/>
        <dbReference type="ChEBI" id="CHEBI:16301"/>
        <dbReference type="ChEBI" id="CHEBI:17632"/>
        <dbReference type="ChEBI" id="CHEBI:24646"/>
        <dbReference type="ChEBI" id="CHEBI:132124"/>
        <dbReference type="EC" id="1.7.5.1"/>
    </reaction>
</comment>
<comment type="cofactor">
    <cofactor evidence="1">
        <name>heme</name>
        <dbReference type="ChEBI" id="CHEBI:30413"/>
    </cofactor>
    <text evidence="1 5">Binds 2 heme groups per subunit. Heme 1, called the proximal or heme Bp in PubMed:12910261, is located at the cytoplasmic interface, heme 2, called the distal or heme Bd, is located at the periplasmic interface. Electrons are transferred from the periplasmic to the cytoplasmic heme (PubMed:12910261). Heme may be transferred to this protein by HemW (Probable).</text>
</comment>
<comment type="subunit">
    <text evidence="1">Dimer of heterotrimers each composed of an alpha, a beta and a gamma chain. Alpha and beta are catalytic chains; gamma chains are involved in binding the enzyme complex to the cytoplasmic membrane.</text>
</comment>
<comment type="subcellular location">
    <subcellularLocation>
        <location evidence="2">Cell inner membrane</location>
        <topology evidence="4">Multi-pass membrane protein</topology>
    </subcellularLocation>
</comment>
<comment type="induction">
    <text>By nitrate.</text>
</comment>
<name>NARI_ECOLI</name>
<keyword id="KW-0002">3D-structure</keyword>
<keyword id="KW-0997">Cell inner membrane</keyword>
<keyword id="KW-1003">Cell membrane</keyword>
<keyword id="KW-0903">Direct protein sequencing</keyword>
<keyword id="KW-0249">Electron transport</keyword>
<keyword id="KW-0291">Formylation</keyword>
<keyword id="KW-0349">Heme</keyword>
<keyword id="KW-0408">Iron</keyword>
<keyword id="KW-0472">Membrane</keyword>
<keyword id="KW-0479">Metal-binding</keyword>
<keyword id="KW-0534">Nitrate assimilation</keyword>
<keyword id="KW-0560">Oxidoreductase</keyword>
<keyword id="KW-1185">Reference proteome</keyword>
<keyword id="KW-0812">Transmembrane</keyword>
<keyword id="KW-1133">Transmembrane helix</keyword>
<keyword id="KW-0813">Transport</keyword>
<organism>
    <name type="scientific">Escherichia coli (strain K12)</name>
    <dbReference type="NCBI Taxonomy" id="83333"/>
    <lineage>
        <taxon>Bacteria</taxon>
        <taxon>Pseudomonadati</taxon>
        <taxon>Pseudomonadota</taxon>
        <taxon>Gammaproteobacteria</taxon>
        <taxon>Enterobacterales</taxon>
        <taxon>Enterobacteriaceae</taxon>
        <taxon>Escherichia</taxon>
    </lineage>
</organism>
<evidence type="ECO:0000269" key="1">
    <source>
    </source>
</evidence>
<evidence type="ECO:0000269" key="2">
    <source>
    </source>
</evidence>
<evidence type="ECO:0000269" key="3">
    <source>
    </source>
</evidence>
<evidence type="ECO:0000305" key="4">
    <source>
    </source>
</evidence>
<evidence type="ECO:0000305" key="5">
    <source>
    </source>
</evidence>
<evidence type="ECO:0007829" key="6">
    <source>
        <dbReference type="PDB" id="1Q16"/>
    </source>
</evidence>
<evidence type="ECO:0007829" key="7">
    <source>
        <dbReference type="PDB" id="1SIW"/>
    </source>
</evidence>
<evidence type="ECO:0007829" key="8">
    <source>
        <dbReference type="PDB" id="3EGW"/>
    </source>
</evidence>
<accession>P11350</accession>
<sequence length="225" mass="25497">MQFLNMFFFDIYPYIAGAVFLIGSWLRYDYGQYTWRAASSQMLDRKGMNLASNLFHIGILGIFVGHFFGMLTPHWMYEAWLPIEVKQKMAMFAGGASGVLCLIGGVLLLKRRLFSPRVRATTTGADILILSLLVIQCALGLLTIPFSAQHMDGSEMMKLVGWAQSVVTFHGGASQHLDGVAFIFRLHLVLGMTLFLLFPFSRLIHIWSVPVEYLTRKYQLVRARH</sequence>
<gene>
    <name type="primary">narI</name>
    <name type="synonym">chlI</name>
    <name type="ordered locus">b1227</name>
    <name type="ordered locus">JW1218</name>
</gene>
<protein>
    <recommendedName>
        <fullName>Respiratory nitrate reductase 1 gamma chain</fullName>
        <ecNumber>1.7.5.1</ecNumber>
    </recommendedName>
    <alternativeName>
        <fullName>Cytochrome B-NR</fullName>
    </alternativeName>
    <alternativeName>
        <fullName>Nitrate reductase A subunit gamma</fullName>
    </alternativeName>
    <alternativeName>
        <fullName>Quinol-nitrate oxidoreductase subunit gamma</fullName>
    </alternativeName>
</protein>
<reference key="1">
    <citation type="journal article" date="1988" name="J. Bacteriol.">
        <title>narI region of the Escherichia coli nitrate reductase (nar) operon contains two genes.</title>
        <authorList>
            <person name="Sodergren E.J."/>
            <person name="Demoss J.A."/>
        </authorList>
    </citation>
    <scope>NUCLEOTIDE SEQUENCE [GENOMIC DNA]</scope>
</reference>
<reference key="2">
    <citation type="journal article" date="1996" name="DNA Res.">
        <title>A 718-kb DNA sequence of the Escherichia coli K-12 genome corresponding to the 12.7-28.0 min region on the linkage map.</title>
        <authorList>
            <person name="Oshima T."/>
            <person name="Aiba H."/>
            <person name="Baba T."/>
            <person name="Fujita K."/>
            <person name="Hayashi K."/>
            <person name="Honjo A."/>
            <person name="Ikemoto K."/>
            <person name="Inada T."/>
            <person name="Itoh T."/>
            <person name="Kajihara M."/>
            <person name="Kanai K."/>
            <person name="Kashimoto K."/>
            <person name="Kimura S."/>
            <person name="Kitagawa M."/>
            <person name="Makino K."/>
            <person name="Masuda S."/>
            <person name="Miki T."/>
            <person name="Mizobuchi K."/>
            <person name="Mori H."/>
            <person name="Motomura K."/>
            <person name="Nakamura Y."/>
            <person name="Nashimoto H."/>
            <person name="Nishio Y."/>
            <person name="Saito N."/>
            <person name="Sampei G."/>
            <person name="Seki Y."/>
            <person name="Tagami H."/>
            <person name="Takemoto K."/>
            <person name="Wada C."/>
            <person name="Yamamoto Y."/>
            <person name="Yano M."/>
            <person name="Horiuchi T."/>
        </authorList>
    </citation>
    <scope>NUCLEOTIDE SEQUENCE [LARGE SCALE GENOMIC DNA]</scope>
    <source>
        <strain>K12 / W3110 / ATCC 27325 / DSM 5911</strain>
    </source>
</reference>
<reference key="3">
    <citation type="journal article" date="1997" name="Science">
        <title>The complete genome sequence of Escherichia coli K-12.</title>
        <authorList>
            <person name="Blattner F.R."/>
            <person name="Plunkett G. III"/>
            <person name="Bloch C.A."/>
            <person name="Perna N.T."/>
            <person name="Burland V."/>
            <person name="Riley M."/>
            <person name="Collado-Vides J."/>
            <person name="Glasner J.D."/>
            <person name="Rode C.K."/>
            <person name="Mayhew G.F."/>
            <person name="Gregor J."/>
            <person name="Davis N.W."/>
            <person name="Kirkpatrick H.A."/>
            <person name="Goeden M.A."/>
            <person name="Rose D.J."/>
            <person name="Mau B."/>
            <person name="Shao Y."/>
        </authorList>
    </citation>
    <scope>NUCLEOTIDE SEQUENCE [LARGE SCALE GENOMIC DNA]</scope>
    <source>
        <strain>K12 / MG1655 / ATCC 47076</strain>
    </source>
</reference>
<reference key="4">
    <citation type="journal article" date="2006" name="Mol. Syst. Biol.">
        <title>Highly accurate genome sequences of Escherichia coli K-12 strains MG1655 and W3110.</title>
        <authorList>
            <person name="Hayashi K."/>
            <person name="Morooka N."/>
            <person name="Yamamoto Y."/>
            <person name="Fujita K."/>
            <person name="Isono K."/>
            <person name="Choi S."/>
            <person name="Ohtsubo E."/>
            <person name="Baba T."/>
            <person name="Wanner B.L."/>
            <person name="Mori H."/>
            <person name="Horiuchi T."/>
        </authorList>
    </citation>
    <scope>NUCLEOTIDE SEQUENCE [LARGE SCALE GENOMIC DNA]</scope>
    <source>
        <strain>K12 / W3110 / ATCC 27325 / DSM 5911</strain>
    </source>
</reference>
<reference key="5">
    <citation type="journal article" date="1988" name="J. Biol. Chem.">
        <title>Roles of the narJ and narI gene products in the expression of nitrate reductase in Escherichia coli.</title>
        <authorList>
            <person name="Sodergren E.J."/>
            <person name="Hsu P.Y."/>
            <person name="Demoss J.A."/>
        </authorList>
    </citation>
    <scope>PROTEIN SEQUENCE OF 1-9</scope>
    <scope>FORMYLATION AT MET-1</scope>
</reference>
<reference key="6">
    <citation type="journal article" date="2005" name="Science">
        <title>Global topology analysis of the Escherichia coli inner membrane proteome.</title>
        <authorList>
            <person name="Daley D.O."/>
            <person name="Rapp M."/>
            <person name="Granseth E."/>
            <person name="Melen K."/>
            <person name="Drew D."/>
            <person name="von Heijne G."/>
        </authorList>
    </citation>
    <scope>SUBCELLULAR LOCATION</scope>
    <scope>TOPOLOGY [LARGE SCALE ANALYSIS]</scope>
    <source>
        <strain>K12 / MG1655 / ATCC 47076</strain>
    </source>
</reference>
<reference key="7">
    <citation type="journal article" date="2018" name="J. Biol. Chem.">
        <title>The radical SAM protein HemW is a heme chaperone.</title>
        <authorList>
            <person name="Haskamp V."/>
            <person name="Karrie S."/>
            <person name="Mingers T."/>
            <person name="Barthels S."/>
            <person name="Alberge F."/>
            <person name="Magalon A."/>
            <person name="Mueller K."/>
            <person name="Bill E."/>
            <person name="Lubitz W."/>
            <person name="Kleeberg K."/>
            <person name="Schweyen P."/>
            <person name="Broering M."/>
            <person name="Jahn M."/>
            <person name="Jahn D."/>
        </authorList>
    </citation>
    <scope>HEME ACQUSITION</scope>
</reference>
<reference key="8">
    <citation type="journal article" date="2003" name="Nat. Struct. Biol.">
        <title>Insights into the respiratory electron transfer pathway from the structure of nitrate reductase A.</title>
        <authorList>
            <person name="Bertero M.G."/>
            <person name="Rothery R.A."/>
            <person name="Palak M."/>
            <person name="Hou C."/>
            <person name="Lim D."/>
            <person name="Blasco F."/>
            <person name="Weiner J.H."/>
            <person name="Strynadka N.C.J."/>
        </authorList>
    </citation>
    <scope>X-RAY CRYSTALLOGRAPHY (1.9 ANGSTROMS) IN COMPLEX WITH HEME</scope>
    <scope>METAL BINDING AT HIS-56; HIS-66; HIS-187 AND HIS-205</scope>
    <scope>COFACTOR</scope>
    <scope>SUBUNIT</scope>
</reference>